<protein>
    <recommendedName>
        <fullName evidence="1">Cytochrome b6-f complex subunit 5</fullName>
    </recommendedName>
    <alternativeName>
        <fullName evidence="1">Cytochrome b6-f complex subunit PetG</fullName>
    </alternativeName>
    <alternativeName>
        <fullName evidence="1">Cytochrome b6-f complex subunit V</fullName>
    </alternativeName>
</protein>
<evidence type="ECO:0000255" key="1">
    <source>
        <dbReference type="HAMAP-Rule" id="MF_00432"/>
    </source>
</evidence>
<sequence length="37" mass="4170">MIEVFLFGIVLGLIPITLAGLFVTAYLQYRRGDQLDL</sequence>
<geneLocation type="chloroplast"/>
<reference key="1">
    <citation type="journal article" date="2006" name="Genes Genet. Syst.">
        <title>Complete nucleotide sequence of the cotton (Gossypium barbadense L.) chloroplast genome with a comparative analysis of sequences among 9 dicot plants.</title>
        <authorList>
            <person name="Ibrahim R.I.H."/>
            <person name="Azuma J."/>
            <person name="Sakamoto M."/>
        </authorList>
    </citation>
    <scope>NUCLEOTIDE SEQUENCE [LARGE SCALE GENOMIC DNA]</scope>
</reference>
<name>PETG_GOSBA</name>
<comment type="function">
    <text evidence="1">Component of the cytochrome b6-f complex, which mediates electron transfer between photosystem II (PSII) and photosystem I (PSI), cyclic electron flow around PSI, and state transitions. PetG is required for either the stability or assembly of the cytochrome b6-f complex.</text>
</comment>
<comment type="subunit">
    <text evidence="1">The 4 large subunits of the cytochrome b6-f complex are cytochrome b6, subunit IV (17 kDa polypeptide, PetD), cytochrome f and the Rieske protein, while the 4 small subunits are PetG, PetL, PetM and PetN. The complex functions as a dimer.</text>
</comment>
<comment type="subcellular location">
    <subcellularLocation>
        <location evidence="1">Plastid</location>
        <location evidence="1">Chloroplast thylakoid membrane</location>
        <topology evidence="1">Single-pass membrane protein</topology>
    </subcellularLocation>
</comment>
<comment type="similarity">
    <text evidence="1">Belongs to the PetG family.</text>
</comment>
<keyword id="KW-0150">Chloroplast</keyword>
<keyword id="KW-0249">Electron transport</keyword>
<keyword id="KW-0472">Membrane</keyword>
<keyword id="KW-0602">Photosynthesis</keyword>
<keyword id="KW-0934">Plastid</keyword>
<keyword id="KW-0793">Thylakoid</keyword>
<keyword id="KW-0812">Transmembrane</keyword>
<keyword id="KW-1133">Transmembrane helix</keyword>
<keyword id="KW-0813">Transport</keyword>
<feature type="chain" id="PRO_0000275490" description="Cytochrome b6-f complex subunit 5">
    <location>
        <begin position="1"/>
        <end position="37"/>
    </location>
</feature>
<feature type="transmembrane region" description="Helical" evidence="1">
    <location>
        <begin position="5"/>
        <end position="25"/>
    </location>
</feature>
<dbReference type="EMBL" id="AP009123">
    <property type="protein sequence ID" value="BAF41266.1"/>
    <property type="molecule type" value="Genomic_DNA"/>
</dbReference>
<dbReference type="RefSeq" id="YP_913206.1">
    <property type="nucleotide sequence ID" value="NC_008641.1"/>
</dbReference>
<dbReference type="SMR" id="A0ZZ54"/>
<dbReference type="GeneID" id="4575208"/>
<dbReference type="OrthoDB" id="959246at2759"/>
<dbReference type="GO" id="GO:0009535">
    <property type="term" value="C:chloroplast thylakoid membrane"/>
    <property type="evidence" value="ECO:0007669"/>
    <property type="project" value="UniProtKB-SubCell"/>
</dbReference>
<dbReference type="GO" id="GO:0009512">
    <property type="term" value="C:cytochrome b6f complex"/>
    <property type="evidence" value="ECO:0007669"/>
    <property type="project" value="InterPro"/>
</dbReference>
<dbReference type="GO" id="GO:0045158">
    <property type="term" value="F:electron transporter, transferring electrons within cytochrome b6/f complex of photosystem II activity"/>
    <property type="evidence" value="ECO:0007669"/>
    <property type="project" value="UniProtKB-UniRule"/>
</dbReference>
<dbReference type="GO" id="GO:0017004">
    <property type="term" value="P:cytochrome complex assembly"/>
    <property type="evidence" value="ECO:0007669"/>
    <property type="project" value="UniProtKB-UniRule"/>
</dbReference>
<dbReference type="GO" id="GO:0015979">
    <property type="term" value="P:photosynthesis"/>
    <property type="evidence" value="ECO:0007669"/>
    <property type="project" value="UniProtKB-KW"/>
</dbReference>
<dbReference type="HAMAP" id="MF_00432">
    <property type="entry name" value="Cytb6_f_PetG"/>
    <property type="match status" value="1"/>
</dbReference>
<dbReference type="InterPro" id="IPR003683">
    <property type="entry name" value="Cyt_6/f_cplx_su5"/>
</dbReference>
<dbReference type="InterPro" id="IPR036099">
    <property type="entry name" value="Cyt_6/f_cplx_su5_sf"/>
</dbReference>
<dbReference type="NCBIfam" id="NF001907">
    <property type="entry name" value="PRK00665.1"/>
    <property type="match status" value="1"/>
</dbReference>
<dbReference type="Pfam" id="PF02529">
    <property type="entry name" value="PetG"/>
    <property type="match status" value="1"/>
</dbReference>
<dbReference type="PIRSF" id="PIRSF000034">
    <property type="entry name" value="Cyt_b6-f_V"/>
    <property type="match status" value="1"/>
</dbReference>
<dbReference type="SUPFAM" id="SSF103446">
    <property type="entry name" value="PetG subunit of the cytochrome b6f complex"/>
    <property type="match status" value="1"/>
</dbReference>
<gene>
    <name evidence="1" type="primary">petG</name>
</gene>
<proteinExistence type="inferred from homology"/>
<accession>A0ZZ54</accession>
<organism>
    <name type="scientific">Gossypium barbadense</name>
    <name type="common">Sea Island cotton</name>
    <name type="synonym">Hibiscus barbadensis</name>
    <dbReference type="NCBI Taxonomy" id="3634"/>
    <lineage>
        <taxon>Eukaryota</taxon>
        <taxon>Viridiplantae</taxon>
        <taxon>Streptophyta</taxon>
        <taxon>Embryophyta</taxon>
        <taxon>Tracheophyta</taxon>
        <taxon>Spermatophyta</taxon>
        <taxon>Magnoliopsida</taxon>
        <taxon>eudicotyledons</taxon>
        <taxon>Gunneridae</taxon>
        <taxon>Pentapetalae</taxon>
        <taxon>rosids</taxon>
        <taxon>malvids</taxon>
        <taxon>Malvales</taxon>
        <taxon>Malvaceae</taxon>
        <taxon>Malvoideae</taxon>
        <taxon>Gossypium</taxon>
    </lineage>
</organism>